<feature type="transit peptide" description="Chloroplast" evidence="2">
    <location>
        <begin position="1"/>
        <end position="36"/>
    </location>
</feature>
<feature type="chain" id="PRO_0000033628" description="Pinene synthase, chloroplastic">
    <location>
        <begin position="37"/>
        <end position="628"/>
    </location>
</feature>
<feature type="short sequence motif" description="DDXXD motif">
    <location>
        <begin position="379"/>
        <end position="383"/>
    </location>
</feature>
<feature type="binding site" evidence="1">
    <location>
        <position position="379"/>
    </location>
    <ligand>
        <name>Mg(2+)</name>
        <dbReference type="ChEBI" id="CHEBI:18420"/>
        <label>1</label>
    </ligand>
</feature>
<feature type="binding site" evidence="1">
    <location>
        <position position="379"/>
    </location>
    <ligand>
        <name>Mg(2+)</name>
        <dbReference type="ChEBI" id="CHEBI:18420"/>
        <label>2</label>
    </ligand>
</feature>
<feature type="binding site" evidence="1">
    <location>
        <position position="383"/>
    </location>
    <ligand>
        <name>Mg(2+)</name>
        <dbReference type="ChEBI" id="CHEBI:18420"/>
        <label>1</label>
    </ligand>
</feature>
<feature type="binding site" evidence="1">
    <location>
        <position position="383"/>
    </location>
    <ligand>
        <name>Mg(2+)</name>
        <dbReference type="ChEBI" id="CHEBI:18420"/>
        <label>2</label>
    </ligand>
</feature>
<feature type="binding site" evidence="1">
    <location>
        <position position="531"/>
    </location>
    <ligand>
        <name>Mg(2+)</name>
        <dbReference type="ChEBI" id="CHEBI:18420"/>
        <label>3</label>
    </ligand>
</feature>
<feature type="sequence conflict" description="In Ref. 2; AAK83564." evidence="5" ref="2">
    <original>K</original>
    <variation>E</variation>
    <location>
        <position position="103"/>
    </location>
</feature>
<feature type="sequence conflict" description="In Ref. 2; AAK83564." evidence="5" ref="2">
    <original>E</original>
    <variation>G</variation>
    <location>
        <position position="134"/>
    </location>
</feature>
<feature type="sequence conflict" description="In Ref. 2; AAK83564." evidence="5" ref="2">
    <original>V</original>
    <variation>A</variation>
    <location>
        <position position="169"/>
    </location>
</feature>
<feature type="sequence conflict" description="In Ref. 2; AAK83564." evidence="5" ref="2">
    <original>L</original>
    <variation>F</variation>
    <location>
        <position position="180"/>
    </location>
</feature>
<feature type="sequence conflict" description="In Ref. 2; AAK83564." evidence="5" ref="2">
    <original>Q</original>
    <variation>H</variation>
    <location>
        <position position="286"/>
    </location>
</feature>
<proteinExistence type="evidence at protein level"/>
<accession>O24475</accession>
<accession>Q94FW0</accession>
<evidence type="ECO:0000250" key="1"/>
<evidence type="ECO:0000255" key="2"/>
<evidence type="ECO:0000269" key="3">
    <source>
    </source>
</evidence>
<evidence type="ECO:0000269" key="4">
    <source>
    </source>
</evidence>
<evidence type="ECO:0000305" key="5"/>
<sequence length="628" mass="71506">MALVSTAPLASKSCLHKSLISSTHELKALSRTIPALGMSRRGKSITPSISMSSTTVVTDDGVRRRMGDFHSNLWDDDVIQSLPTAYEEKSYLERAEKLIGEVKNMFNSMSLEDGELMSPLNDLIQRLWIVDSLERLGIHRHFKDEIKSALDYVYSYWGENGIGCGRESVVTDLNSTALGLRTLRLHGYPVSSDVFKAFKGQNGQFSCSENIQTDEEIRGVLNLFRASLIAFPGEKIMDEAEIFSTKYLKEALQKIPVSSLSREIGDVLEYGWHTYLPRLEARNYIQVFGQDTENTKSYVKSKKLLELAKLEFNIFQSLQKRELESLVRWWKESGFPEMTFCRHRHVEYYTLASCIAFEPQHSGFRLGFAKTCHLITVLDDMYDTFGTVDELELFTATMKRWDPSSIDCLPEYMKGVYIAVYDTVNEMAREAEEAQGRDTLTYAREAWEAYIDSYMQEARWIATGYLPSFDEYYENGKVSCGHRISALQPILTMDIPFPDHILKEVDFPSKLNDLACAILRLRGDTRCYKADRARGEEASSISCYMKDNPGVSEEDALDHINAMISDVIKGLNWELLKPDINVPISAKKHAFDIARAFHYGYKYRDGYSVANVETKSLVTRTLLESVPL</sequence>
<organism>
    <name type="scientific">Abies grandis</name>
    <name type="common">Grand fir</name>
    <name type="synonym">Pinus grandis</name>
    <dbReference type="NCBI Taxonomy" id="46611"/>
    <lineage>
        <taxon>Eukaryota</taxon>
        <taxon>Viridiplantae</taxon>
        <taxon>Streptophyta</taxon>
        <taxon>Embryophyta</taxon>
        <taxon>Tracheophyta</taxon>
        <taxon>Spermatophyta</taxon>
        <taxon>Pinopsida</taxon>
        <taxon>Pinidae</taxon>
        <taxon>Conifers I</taxon>
        <taxon>Pinales</taxon>
        <taxon>Pinaceae</taxon>
        <taxon>Abies</taxon>
    </lineage>
</organism>
<reference key="1">
    <citation type="journal article" date="1997" name="J. Biol. Chem.">
        <title>Monoterpene synthases from grand fir (Abies grandis). cDNA isolation, characterization, and functional expression of myrcene synthase, (-)-(4S)-limonene synthase, and (-)-(1S,5S)-pinene synthase.</title>
        <authorList>
            <person name="Bohlmann J."/>
            <person name="Steele C.L."/>
            <person name="Croteau R.B."/>
        </authorList>
    </citation>
    <scope>NUCLEOTIDE SEQUENCE [MRNA]</scope>
    <scope>INDUCTION</scope>
    <scope>CATALYTIC ACTIVITY</scope>
    <scope>CHARACTERIZATION</scope>
</reference>
<reference key="2">
    <citation type="journal article" date="2001" name="Genetics">
        <title>Genomic organization of plant terpene synthases and molecular evolutionary implications.</title>
        <authorList>
            <person name="Trapp S.C."/>
            <person name="Croteau R.B."/>
        </authorList>
    </citation>
    <scope>NUCLEOTIDE SEQUENCE [GENOMIC DNA] OF 6-628</scope>
    <scope>NOMENCLATURE</scope>
</reference>
<reference key="3">
    <citation type="journal article" date="1998" name="Proc. Natl. Acad. Sci. U.S.A.">
        <title>Plant terpenoid synthases: molecular biology and phylogenetic analysis.</title>
        <authorList>
            <person name="Bohlmann J."/>
            <person name="Meyer-Gauen G."/>
            <person name="Croteau R.B."/>
        </authorList>
    </citation>
    <scope>GENE FAMILY</scope>
    <scope>NOMENCLATURE</scope>
    <scope>FUNCTION</scope>
</reference>
<dbReference type="EC" id="4.2.3.119"/>
<dbReference type="EC" id="4.2.3.120"/>
<dbReference type="EMBL" id="U87909">
    <property type="protein sequence ID" value="AAB71085.1"/>
    <property type="molecule type" value="mRNA"/>
</dbReference>
<dbReference type="EMBL" id="AF326517">
    <property type="protein sequence ID" value="AAK83564.1"/>
    <property type="molecule type" value="Genomic_DNA"/>
</dbReference>
<dbReference type="SMR" id="O24475"/>
<dbReference type="KEGG" id="ag:AAB71085"/>
<dbReference type="BioCyc" id="MetaCyc:MONOMER-12819"/>
<dbReference type="BRENDA" id="4.2.3.119">
    <property type="organism ID" value="2"/>
</dbReference>
<dbReference type="BRENDA" id="4.2.3.120">
    <property type="organism ID" value="2"/>
</dbReference>
<dbReference type="UniPathway" id="UPA00924"/>
<dbReference type="GO" id="GO:0009507">
    <property type="term" value="C:chloroplast"/>
    <property type="evidence" value="ECO:0007669"/>
    <property type="project" value="UniProtKB-SubCell"/>
</dbReference>
<dbReference type="GO" id="GO:0000287">
    <property type="term" value="F:magnesium ion binding"/>
    <property type="evidence" value="ECO:0007669"/>
    <property type="project" value="InterPro"/>
</dbReference>
<dbReference type="GO" id="GO:0050550">
    <property type="term" value="F:pinene synthase activity"/>
    <property type="evidence" value="ECO:0007669"/>
    <property type="project" value="UniProtKB-EC"/>
</dbReference>
<dbReference type="GO" id="GO:0016102">
    <property type="term" value="P:diterpenoid biosynthetic process"/>
    <property type="evidence" value="ECO:0007669"/>
    <property type="project" value="InterPro"/>
</dbReference>
<dbReference type="CDD" id="cd00684">
    <property type="entry name" value="Terpene_cyclase_plant_C1"/>
    <property type="match status" value="1"/>
</dbReference>
<dbReference type="FunFam" id="1.50.10.130:FF:000004">
    <property type="entry name" value="Carene synthase, chloroplastic"/>
    <property type="match status" value="1"/>
</dbReference>
<dbReference type="FunFam" id="1.10.600.10:FF:000005">
    <property type="entry name" value="Ent-kaur-16-ene synthase, chloroplastic"/>
    <property type="match status" value="1"/>
</dbReference>
<dbReference type="Gene3D" id="1.10.600.10">
    <property type="entry name" value="Farnesyl Diphosphate Synthase"/>
    <property type="match status" value="1"/>
</dbReference>
<dbReference type="Gene3D" id="1.50.10.130">
    <property type="entry name" value="Terpene synthase, N-terminal domain"/>
    <property type="match status" value="1"/>
</dbReference>
<dbReference type="InterPro" id="IPR008949">
    <property type="entry name" value="Isoprenoid_synthase_dom_sf"/>
</dbReference>
<dbReference type="InterPro" id="IPR034741">
    <property type="entry name" value="Terpene_cyclase-like_1_C"/>
</dbReference>
<dbReference type="InterPro" id="IPR044814">
    <property type="entry name" value="Terpene_cyclase_plant_C1"/>
</dbReference>
<dbReference type="InterPro" id="IPR001906">
    <property type="entry name" value="Terpene_synth_N"/>
</dbReference>
<dbReference type="InterPro" id="IPR036965">
    <property type="entry name" value="Terpene_synth_N_sf"/>
</dbReference>
<dbReference type="InterPro" id="IPR050148">
    <property type="entry name" value="Terpene_synthase-like"/>
</dbReference>
<dbReference type="InterPro" id="IPR005630">
    <property type="entry name" value="Terpene_synthase_metal-bd"/>
</dbReference>
<dbReference type="InterPro" id="IPR008930">
    <property type="entry name" value="Terpenoid_cyclase/PrenylTrfase"/>
</dbReference>
<dbReference type="PANTHER" id="PTHR31225">
    <property type="entry name" value="OS04G0344100 PROTEIN-RELATED"/>
    <property type="match status" value="1"/>
</dbReference>
<dbReference type="PANTHER" id="PTHR31225:SF137">
    <property type="entry name" value="TERPENE SYNTHASE 11-RELATED"/>
    <property type="match status" value="1"/>
</dbReference>
<dbReference type="Pfam" id="PF01397">
    <property type="entry name" value="Terpene_synth"/>
    <property type="match status" value="1"/>
</dbReference>
<dbReference type="Pfam" id="PF03936">
    <property type="entry name" value="Terpene_synth_C"/>
    <property type="match status" value="1"/>
</dbReference>
<dbReference type="SFLD" id="SFLDS00005">
    <property type="entry name" value="Isoprenoid_Synthase_Type_I"/>
    <property type="match status" value="1"/>
</dbReference>
<dbReference type="SFLD" id="SFLDG01019">
    <property type="entry name" value="Terpene_Cyclase_Like_1_C_Termi"/>
    <property type="match status" value="1"/>
</dbReference>
<dbReference type="SFLD" id="SFLDG01014">
    <property type="entry name" value="Terpene_Cyclase_Like_1_N-term"/>
    <property type="match status" value="1"/>
</dbReference>
<dbReference type="SUPFAM" id="SSF48239">
    <property type="entry name" value="Terpenoid cyclases/Protein prenyltransferases"/>
    <property type="match status" value="1"/>
</dbReference>
<dbReference type="SUPFAM" id="SSF48576">
    <property type="entry name" value="Terpenoid synthases"/>
    <property type="match status" value="1"/>
</dbReference>
<gene>
    <name type="primary">ag3</name>
    <name type="synonym">AG3.18</name>
</gene>
<name>TPSD3_ABIGR</name>
<comment type="function">
    <text evidence="4">Involved in defensive oleoresin formation in conifers in response to insect attack or other injury. Involved in monoterpene (C10) olefins biosynthesis. A mixture of alpha- and beta-pinene is produced by this enzyme.</text>
</comment>
<comment type="catalytic activity">
    <reaction evidence="3">
        <text>(2E)-geranyl diphosphate = (1S,5S)-alpha-pinene + diphosphate</text>
        <dbReference type="Rhea" id="RHEA:25488"/>
        <dbReference type="ChEBI" id="CHEBI:28660"/>
        <dbReference type="ChEBI" id="CHEBI:33019"/>
        <dbReference type="ChEBI" id="CHEBI:58057"/>
        <dbReference type="EC" id="4.2.3.119"/>
    </reaction>
</comment>
<comment type="catalytic activity">
    <reaction evidence="3">
        <text>(2E)-geranyl diphosphate = (1S,5S)-beta-pinene + diphosphate</text>
        <dbReference type="Rhea" id="RHEA:25496"/>
        <dbReference type="ChEBI" id="CHEBI:28359"/>
        <dbReference type="ChEBI" id="CHEBI:33019"/>
        <dbReference type="ChEBI" id="CHEBI:58057"/>
        <dbReference type="EC" id="4.2.3.120"/>
    </reaction>
</comment>
<comment type="cofactor">
    <cofactor evidence="1">
        <name>Mg(2+)</name>
        <dbReference type="ChEBI" id="CHEBI:18420"/>
    </cofactor>
    <cofactor evidence="1">
        <name>Mn(2+)</name>
        <dbReference type="ChEBI" id="CHEBI:29035"/>
    </cofactor>
    <text evidence="1">Binds 3 Mg(2+) or Mn(2+) ions per subunit.</text>
</comment>
<comment type="cofactor">
    <cofactor>
        <name>K(+)</name>
        <dbReference type="ChEBI" id="CHEBI:29103"/>
    </cofactor>
</comment>
<comment type="pathway">
    <text>Terpene metabolism; oleoresin biosynthesis.</text>
</comment>
<comment type="subcellular location">
    <subcellularLocation>
        <location>Plastid</location>
        <location>Chloroplast</location>
    </subcellularLocation>
</comment>
<comment type="induction">
    <text evidence="3">By wounding.</text>
</comment>
<comment type="domain">
    <text>The Asp-Asp-Xaa-Xaa-Asp/Glu (DDXXD/E) motif is important for the catalytic activity, presumably through binding to Mg(2+).</text>
</comment>
<comment type="miscellaneous">
    <text>The conserved 64-Arg-Arg-65 motif may play a role in the isomerization step of the terpenoid cyclization reaction sequence.</text>
</comment>
<comment type="similarity">
    <text evidence="5">Belongs to the terpene synthase family. Tpsd subfamily.</text>
</comment>
<keyword id="KW-0150">Chloroplast</keyword>
<keyword id="KW-0456">Lyase</keyword>
<keyword id="KW-0460">Magnesium</keyword>
<keyword id="KW-0464">Manganese</keyword>
<keyword id="KW-0479">Metal-binding</keyword>
<keyword id="KW-0934">Plastid</keyword>
<keyword id="KW-0809">Transit peptide</keyword>
<protein>
    <recommendedName>
        <fullName>Pinene synthase, chloroplastic</fullName>
        <ecNumber>4.2.3.119</ecNumber>
        <ecNumber>4.2.3.120</ecNumber>
    </recommendedName>
    <alternativeName>
        <fullName>(-)-(1S,5S)-pinene synthase</fullName>
    </alternativeName>
    <alternativeName>
        <fullName>Agg-pin1</fullName>
    </alternativeName>
    <alternativeName>
        <fullName>Beta-geraniolene synthase</fullName>
    </alternativeName>
</protein>